<dbReference type="EC" id="2.1.1.-" evidence="3"/>
<dbReference type="EMBL" id="BC086512">
    <property type="protein sequence ID" value="AAH86512.1"/>
    <property type="molecule type" value="mRNA"/>
</dbReference>
<dbReference type="RefSeq" id="NP_001012014.1">
    <property type="nucleotide sequence ID" value="NM_001012014.1"/>
</dbReference>
<dbReference type="SMR" id="Q5RJT2"/>
<dbReference type="FunCoup" id="Q5RJT2">
    <property type="interactions" value="3536"/>
</dbReference>
<dbReference type="STRING" id="10116.ENSRNOP00000013295"/>
<dbReference type="iPTMnet" id="Q5RJT2"/>
<dbReference type="PhosphoSitePlus" id="Q5RJT2"/>
<dbReference type="PaxDb" id="10116-ENSRNOP00000013295"/>
<dbReference type="Ensembl" id="ENSRNOT00000013295.7">
    <property type="protein sequence ID" value="ENSRNOP00000013295.3"/>
    <property type="gene ID" value="ENSRNOG00000009857.7"/>
</dbReference>
<dbReference type="GeneID" id="303608"/>
<dbReference type="KEGG" id="rno:303608"/>
<dbReference type="UCSC" id="RGD:1307110">
    <property type="organism name" value="rat"/>
</dbReference>
<dbReference type="AGR" id="RGD:1307110"/>
<dbReference type="CTD" id="117246"/>
<dbReference type="RGD" id="1307110">
    <property type="gene designation" value="Ftsj3"/>
</dbReference>
<dbReference type="eggNOG" id="KOG1098">
    <property type="taxonomic scope" value="Eukaryota"/>
</dbReference>
<dbReference type="GeneTree" id="ENSGT00550000075004"/>
<dbReference type="HOGENOM" id="CLU_009422_8_1_1"/>
<dbReference type="InParanoid" id="Q5RJT2"/>
<dbReference type="OMA" id="QRKDKYY"/>
<dbReference type="OrthoDB" id="289250at2759"/>
<dbReference type="PhylomeDB" id="Q5RJT2"/>
<dbReference type="TreeFam" id="TF106102"/>
<dbReference type="Reactome" id="R-RNO-6791226">
    <property type="pathway name" value="Major pathway of rRNA processing in the nucleolus and cytosol"/>
</dbReference>
<dbReference type="PRO" id="PR:Q5RJT2"/>
<dbReference type="Proteomes" id="UP000002494">
    <property type="component" value="Chromosome 10"/>
</dbReference>
<dbReference type="Bgee" id="ENSRNOG00000009857">
    <property type="expression patterns" value="Expressed in spleen and 20 other cell types or tissues"/>
</dbReference>
<dbReference type="GO" id="GO:0005694">
    <property type="term" value="C:chromosome"/>
    <property type="evidence" value="ECO:0007669"/>
    <property type="project" value="Ensembl"/>
</dbReference>
<dbReference type="GO" id="GO:0005730">
    <property type="term" value="C:nucleolus"/>
    <property type="evidence" value="ECO:0000318"/>
    <property type="project" value="GO_Central"/>
</dbReference>
<dbReference type="GO" id="GO:0005654">
    <property type="term" value="C:nucleoplasm"/>
    <property type="evidence" value="ECO:0007669"/>
    <property type="project" value="Ensembl"/>
</dbReference>
<dbReference type="GO" id="GO:0030687">
    <property type="term" value="C:preribosome, large subunit precursor"/>
    <property type="evidence" value="ECO:0000318"/>
    <property type="project" value="GO_Central"/>
</dbReference>
<dbReference type="GO" id="GO:0030688">
    <property type="term" value="C:preribosome, small subunit precursor"/>
    <property type="evidence" value="ECO:0007669"/>
    <property type="project" value="UniProtKB-UniRule"/>
</dbReference>
<dbReference type="GO" id="GO:0062105">
    <property type="term" value="F:RNA 2'-O-methyltransferase activity"/>
    <property type="evidence" value="ECO:0000250"/>
    <property type="project" value="UniProtKB"/>
</dbReference>
<dbReference type="GO" id="GO:0016435">
    <property type="term" value="F:rRNA (guanine) methyltransferase activity"/>
    <property type="evidence" value="ECO:0000318"/>
    <property type="project" value="GO_Central"/>
</dbReference>
<dbReference type="GO" id="GO:0008650">
    <property type="term" value="F:rRNA (uridine-2'-O-)-methyltransferase activity"/>
    <property type="evidence" value="ECO:0000318"/>
    <property type="project" value="GO_Central"/>
</dbReference>
<dbReference type="GO" id="GO:0000466">
    <property type="term" value="P:maturation of 5.8S rRNA from tricistronic rRNA transcript (SSU-rRNA, 5.8S rRNA, LSU-rRNA)"/>
    <property type="evidence" value="ECO:0000318"/>
    <property type="project" value="GO_Central"/>
</dbReference>
<dbReference type="GO" id="GO:0000463">
    <property type="term" value="P:maturation of LSU-rRNA from tricistronic rRNA transcript (SSU-rRNA, 5.8S rRNA, LSU-rRNA)"/>
    <property type="evidence" value="ECO:0000318"/>
    <property type="project" value="GO_Central"/>
</dbReference>
<dbReference type="GO" id="GO:0001510">
    <property type="term" value="P:RNA methylation"/>
    <property type="evidence" value="ECO:0000250"/>
    <property type="project" value="UniProtKB"/>
</dbReference>
<dbReference type="GO" id="GO:0031167">
    <property type="term" value="P:rRNA methylation"/>
    <property type="evidence" value="ECO:0000318"/>
    <property type="project" value="GO_Central"/>
</dbReference>
<dbReference type="FunFam" id="3.40.50.150:FF:000004">
    <property type="entry name" value="AdoMet-dependent rRNA methyltransferase SPB1"/>
    <property type="match status" value="1"/>
</dbReference>
<dbReference type="Gene3D" id="3.40.50.150">
    <property type="entry name" value="Vaccinia Virus protein VP39"/>
    <property type="match status" value="1"/>
</dbReference>
<dbReference type="HAMAP" id="MF_01547">
    <property type="entry name" value="RNA_methyltr_E"/>
    <property type="match status" value="1"/>
</dbReference>
<dbReference type="HAMAP" id="MF_03163">
    <property type="entry name" value="RNA_methyltr_E_SPB1"/>
    <property type="match status" value="1"/>
</dbReference>
<dbReference type="InterPro" id="IPR050082">
    <property type="entry name" value="RNA_methyltr_RlmE"/>
</dbReference>
<dbReference type="InterPro" id="IPR002877">
    <property type="entry name" value="RNA_MeTrfase_FtsJ_dom"/>
</dbReference>
<dbReference type="InterPro" id="IPR015507">
    <property type="entry name" value="rRNA-MeTfrase_E"/>
</dbReference>
<dbReference type="InterPro" id="IPR012920">
    <property type="entry name" value="rRNA_MeTfrase_SPB1-like_C"/>
</dbReference>
<dbReference type="InterPro" id="IPR024576">
    <property type="entry name" value="rRNA_MeTfrase_Spb1_DUF3381"/>
</dbReference>
<dbReference type="InterPro" id="IPR029063">
    <property type="entry name" value="SAM-dependent_MTases_sf"/>
</dbReference>
<dbReference type="InterPro" id="IPR028589">
    <property type="entry name" value="SPB1-like"/>
</dbReference>
<dbReference type="PANTHER" id="PTHR10920:SF13">
    <property type="entry name" value="PRE-RRNA 2'-O-RIBOSE RNA METHYLTRANSFERASE FTSJ3"/>
    <property type="match status" value="1"/>
</dbReference>
<dbReference type="PANTHER" id="PTHR10920">
    <property type="entry name" value="RIBOSOMAL RNA METHYLTRANSFERASE"/>
    <property type="match status" value="1"/>
</dbReference>
<dbReference type="Pfam" id="PF11861">
    <property type="entry name" value="DUF3381"/>
    <property type="match status" value="1"/>
</dbReference>
<dbReference type="Pfam" id="PF01728">
    <property type="entry name" value="FtsJ"/>
    <property type="match status" value="1"/>
</dbReference>
<dbReference type="Pfam" id="PF07780">
    <property type="entry name" value="Spb1_C"/>
    <property type="match status" value="1"/>
</dbReference>
<dbReference type="SUPFAM" id="SSF53335">
    <property type="entry name" value="S-adenosyl-L-methionine-dependent methyltransferases"/>
    <property type="match status" value="1"/>
</dbReference>
<comment type="function">
    <text evidence="3">RNA 2'-O-methyltransferase involved in the processing of the 34S pre-rRNA to 18S rRNA and in 40S ribosomal subunit formation.</text>
</comment>
<comment type="catalytic activity">
    <reaction evidence="3">
        <text>a ribonucleotide in rRNA + S-adenosyl-L-methionine = a 2'-O-methylribonucleotide in rRNA + S-adenosyl-L-homocysteine + H(+)</text>
        <dbReference type="Rhea" id="RHEA:48628"/>
        <dbReference type="Rhea" id="RHEA-COMP:12164"/>
        <dbReference type="Rhea" id="RHEA-COMP:12165"/>
        <dbReference type="ChEBI" id="CHEBI:15378"/>
        <dbReference type="ChEBI" id="CHEBI:57856"/>
        <dbReference type="ChEBI" id="CHEBI:59789"/>
        <dbReference type="ChEBI" id="CHEBI:90675"/>
        <dbReference type="ChEBI" id="CHEBI:90676"/>
    </reaction>
</comment>
<comment type="subunit">
    <text evidence="3">Interacts with NIP7.</text>
</comment>
<comment type="subcellular location">
    <subcellularLocation>
        <location evidence="3">Nucleus</location>
        <location evidence="3">Nucleolus</location>
    </subcellularLocation>
</comment>
<comment type="PTM">
    <text evidence="2">Citrullinated by PADI4.</text>
</comment>
<comment type="similarity">
    <text evidence="3">Belongs to the class I-like SAM-binding methyltransferase superfamily. RNA methyltransferase RlmE family. SPB1 subfamily.</text>
</comment>
<name>SPB1_RAT</name>
<accession>Q5RJT2</accession>
<sequence>MGKKGKVGKSRRDKFYHLAKETGYRSRSAFKLIQLNRRFQFLQKARALLDLCAAPGGWLQVAAKFMPVSSLIVGVDLVPIKPLPNVVTLQEDITTERCRQALRKELKTWKVDVVLNDGAPNVGASWVHDAYSQAHLTLMALRLACDFLARGGCFITKVFRSRDYQPLLWIFQQLFHRVQATKPQASRHESAEIFVVCQGFLAPDKVDAKFFDPKFAFKEVEVQAKTVTELVTKKKPKAEGYAEGDLTLYHRTSVTDFLRAANPVDFLSKASEISIDDKELAQHPATTEDIRACCQDIKVLGRKELRSLLNWRTKLRRYVAKKLKEQAKALDISLSSEEEGDEEESAAETKQASEEEEEREEEEQLNRTLAEMKAQEVAELKRKKKKLLREQRKQRERVELKMDLPGVSIADEGETGMFSLRTIRGQQLLEEVTQGDMNAADTFLSDLPRDDIYVSDAEDDDDTSLESDLDPEELAGVRTHSDQKEQKSLQFAQVDDSKEEEGENPLLVPLEEKAVLQEEQASLWFSKDGFSGIDDDADEALEISQAQLLYKSRQKEQQPTDPPPPPTNLKTEKKSSQCQNEVPKETEAITDTGGEDRDSSDSDSSSSEDEDDWKVSRGKKRSRGSKADEDGFEVVPIEDPVKYRILDPEGLALGAVIASSKKAKRDLIDNSFNRYAFNEEEEELPEWFVQEEKQHRIRQLPLDKKEVEHYRKRWREINARPIKKVAEAKARKKRRMLKKLEQTKKKAEAVVNTVDISEREKVAQLRSLYKKAGLGKEKRQVTYVVAKKGVGRKVRRPAGVRGHFKVVDSRMKKDQRAQRKEQKRNHRRK</sequence>
<protein>
    <recommendedName>
        <fullName evidence="3">pre-rRNA 2'-O-ribose RNA methyltransferase FTSJ3</fullName>
        <ecNumber evidence="3">2.1.1.-</ecNumber>
    </recommendedName>
    <alternativeName>
        <fullName evidence="3">Protein ftsJ homolog 3</fullName>
    </alternativeName>
    <alternativeName>
        <fullName evidence="3">Putative rRNA methyltransferase 3</fullName>
    </alternativeName>
</protein>
<keyword id="KW-0164">Citrullination</keyword>
<keyword id="KW-0175">Coiled coil</keyword>
<keyword id="KW-1017">Isopeptide bond</keyword>
<keyword id="KW-0489">Methyltransferase</keyword>
<keyword id="KW-0539">Nucleus</keyword>
<keyword id="KW-0597">Phosphoprotein</keyword>
<keyword id="KW-1185">Reference proteome</keyword>
<keyword id="KW-0690">Ribosome biogenesis</keyword>
<keyword id="KW-0698">rRNA processing</keyword>
<keyword id="KW-0949">S-adenosyl-L-methionine</keyword>
<keyword id="KW-0808">Transferase</keyword>
<keyword id="KW-0832">Ubl conjugation</keyword>
<reference key="1">
    <citation type="journal article" date="2004" name="Genome Res.">
        <title>The status, quality, and expansion of the NIH full-length cDNA project: the Mammalian Gene Collection (MGC).</title>
        <authorList>
            <consortium name="The MGC Project Team"/>
        </authorList>
    </citation>
    <scope>NUCLEOTIDE SEQUENCE [LARGE SCALE MRNA]</scope>
    <source>
        <tissue>Testis</tissue>
    </source>
</reference>
<reference key="2">
    <citation type="journal article" date="2012" name="Nat. Commun.">
        <title>Quantitative maps of protein phosphorylation sites across 14 different rat organs and tissues.</title>
        <authorList>
            <person name="Lundby A."/>
            <person name="Secher A."/>
            <person name="Lage K."/>
            <person name="Nordsborg N.B."/>
            <person name="Dmytriyev A."/>
            <person name="Lundby C."/>
            <person name="Olsen J.V."/>
        </authorList>
    </citation>
    <scope>PHOSPHORYLATION [LARGE SCALE ANALYSIS] AT SER-335; SER-336; SER-345; SER-353 AND SER-531</scope>
    <scope>IDENTIFICATION BY MASS SPECTROMETRY [LARGE SCALE ANALYSIS]</scope>
</reference>
<feature type="chain" id="PRO_0000155580" description="pre-rRNA 2'-O-ribose RNA methyltransferase FTSJ3">
    <location>
        <begin position="1"/>
        <end position="829"/>
    </location>
</feature>
<feature type="region of interest" description="Disordered" evidence="4">
    <location>
        <begin position="332"/>
        <end position="367"/>
    </location>
</feature>
<feature type="region of interest" description="Disordered" evidence="4">
    <location>
        <begin position="443"/>
        <end position="508"/>
    </location>
</feature>
<feature type="region of interest" description="Disordered" evidence="4">
    <location>
        <begin position="528"/>
        <end position="634"/>
    </location>
</feature>
<feature type="region of interest" description="Disordered" evidence="4">
    <location>
        <begin position="794"/>
        <end position="829"/>
    </location>
</feature>
<feature type="coiled-coil region" evidence="3">
    <location>
        <begin position="722"/>
        <end position="760"/>
    </location>
</feature>
<feature type="compositionally biased region" description="Acidic residues" evidence="4">
    <location>
        <begin position="336"/>
        <end position="346"/>
    </location>
</feature>
<feature type="compositionally biased region" description="Acidic residues" evidence="4">
    <location>
        <begin position="354"/>
        <end position="363"/>
    </location>
</feature>
<feature type="compositionally biased region" description="Acidic residues" evidence="4">
    <location>
        <begin position="456"/>
        <end position="473"/>
    </location>
</feature>
<feature type="compositionally biased region" description="Basic residues" evidence="4">
    <location>
        <begin position="794"/>
        <end position="804"/>
    </location>
</feature>
<feature type="compositionally biased region" description="Basic and acidic residues" evidence="4">
    <location>
        <begin position="805"/>
        <end position="820"/>
    </location>
</feature>
<feature type="active site" description="Proton acceptor" evidence="3">
    <location>
        <position position="157"/>
    </location>
</feature>
<feature type="binding site" evidence="3">
    <location>
        <position position="56"/>
    </location>
    <ligand>
        <name>S-adenosyl-L-methionine</name>
        <dbReference type="ChEBI" id="CHEBI:59789"/>
    </ligand>
</feature>
<feature type="binding site" evidence="3">
    <location>
        <position position="58"/>
    </location>
    <ligand>
        <name>S-adenosyl-L-methionine</name>
        <dbReference type="ChEBI" id="CHEBI:59789"/>
    </ligand>
</feature>
<feature type="binding site" evidence="3">
    <location>
        <position position="76"/>
    </location>
    <ligand>
        <name>S-adenosyl-L-methionine</name>
        <dbReference type="ChEBI" id="CHEBI:59789"/>
    </ligand>
</feature>
<feature type="binding site" evidence="3">
    <location>
        <position position="92"/>
    </location>
    <ligand>
        <name>S-adenosyl-L-methionine</name>
        <dbReference type="ChEBI" id="CHEBI:59789"/>
    </ligand>
</feature>
<feature type="binding site" evidence="3">
    <location>
        <position position="117"/>
    </location>
    <ligand>
        <name>S-adenosyl-L-methionine</name>
        <dbReference type="ChEBI" id="CHEBI:59789"/>
    </ligand>
</feature>
<feature type="modified residue" description="Phosphoserine" evidence="1">
    <location>
        <position position="333"/>
    </location>
</feature>
<feature type="modified residue" description="Phosphoserine" evidence="5">
    <location>
        <position position="335"/>
    </location>
</feature>
<feature type="modified residue" description="Phosphoserine" evidence="5">
    <location>
        <position position="336"/>
    </location>
</feature>
<feature type="modified residue" description="Phosphoserine" evidence="5">
    <location>
        <position position="345"/>
    </location>
</feature>
<feature type="modified residue" description="Phosphoserine" evidence="5">
    <location>
        <position position="353"/>
    </location>
</feature>
<feature type="modified residue" description="Citrulline" evidence="2">
    <location>
        <position position="389"/>
    </location>
</feature>
<feature type="modified residue" description="Phosphoserine" evidence="5">
    <location>
        <position position="531"/>
    </location>
</feature>
<feature type="modified residue" description="Phosphoserine" evidence="1">
    <location>
        <position position="544"/>
    </location>
</feature>
<feature type="modified residue" description="Phosphoserine" evidence="1">
    <location>
        <position position="575"/>
    </location>
</feature>
<feature type="modified residue" description="Phosphoserine" evidence="1">
    <location>
        <position position="659"/>
    </location>
</feature>
<feature type="modified residue" description="Phosphoserine" evidence="1">
    <location>
        <position position="671"/>
    </location>
</feature>
<feature type="modified residue" description="Citrulline" evidence="2">
    <location>
        <position position="766"/>
    </location>
</feature>
<feature type="cross-link" description="Glycyl lysine isopeptide (Lys-Gly) (interchain with G-Cter in SUMO2)" evidence="1">
    <location>
        <position position="570"/>
    </location>
</feature>
<feature type="cross-link" description="Glycyl lysine isopeptide (Lys-Gly) (interchain with G-Cter in SUMO2)" evidence="1">
    <location>
        <position position="626"/>
    </location>
</feature>
<feature type="cross-link" description="Glycyl lysine isopeptide (Lys-Gly) (interchain with G-Cter in SUMO2)" evidence="1">
    <location>
        <position position="642"/>
    </location>
</feature>
<feature type="cross-link" description="Glycyl lysine isopeptide (Lys-Gly) (interchain with G-Cter in SUMO2)" evidence="1">
    <location>
        <position position="661"/>
    </location>
</feature>
<feature type="cross-link" description="Glycyl lysine isopeptide (Lys-Gly) (interchain with G-Cter in SUMO2)" evidence="1">
    <location>
        <position position="693"/>
    </location>
</feature>
<evidence type="ECO:0000250" key="1">
    <source>
        <dbReference type="UniProtKB" id="Q8IY81"/>
    </source>
</evidence>
<evidence type="ECO:0000250" key="2">
    <source>
        <dbReference type="UniProtKB" id="Q9DBE9"/>
    </source>
</evidence>
<evidence type="ECO:0000255" key="3">
    <source>
        <dbReference type="HAMAP-Rule" id="MF_03163"/>
    </source>
</evidence>
<evidence type="ECO:0000256" key="4">
    <source>
        <dbReference type="SAM" id="MobiDB-lite"/>
    </source>
</evidence>
<evidence type="ECO:0007744" key="5">
    <source>
    </source>
</evidence>
<gene>
    <name type="primary">Ftsj3</name>
</gene>
<organism>
    <name type="scientific">Rattus norvegicus</name>
    <name type="common">Rat</name>
    <dbReference type="NCBI Taxonomy" id="10116"/>
    <lineage>
        <taxon>Eukaryota</taxon>
        <taxon>Metazoa</taxon>
        <taxon>Chordata</taxon>
        <taxon>Craniata</taxon>
        <taxon>Vertebrata</taxon>
        <taxon>Euteleostomi</taxon>
        <taxon>Mammalia</taxon>
        <taxon>Eutheria</taxon>
        <taxon>Euarchontoglires</taxon>
        <taxon>Glires</taxon>
        <taxon>Rodentia</taxon>
        <taxon>Myomorpha</taxon>
        <taxon>Muroidea</taxon>
        <taxon>Muridae</taxon>
        <taxon>Murinae</taxon>
        <taxon>Rattus</taxon>
    </lineage>
</organism>
<proteinExistence type="evidence at protein level"/>